<gene>
    <name evidence="2" type="primary">rpsL</name>
    <name type="ordered locus">Pmen_3914</name>
</gene>
<comment type="function">
    <text evidence="2">With S4 and S5 plays an important role in translational accuracy.</text>
</comment>
<comment type="function">
    <text evidence="2">Interacts with and stabilizes bases of the 16S rRNA that are involved in tRNA selection in the A site and with the mRNA backbone. Located at the interface of the 30S and 50S subunits, it traverses the body of the 30S subunit contacting proteins on the other side and probably holding the rRNA structure together. The combined cluster of proteins S8, S12 and S17 appears to hold together the shoulder and platform of the 30S subunit.</text>
</comment>
<comment type="subunit">
    <text evidence="2">Part of the 30S ribosomal subunit. Contacts proteins S8 and S17. May interact with IF1 in the 30S initiation complex.</text>
</comment>
<comment type="similarity">
    <text evidence="2">Belongs to the universal ribosomal protein uS12 family.</text>
</comment>
<accession>A4XZ95</accession>
<reference key="1">
    <citation type="submission" date="2007-04" db="EMBL/GenBank/DDBJ databases">
        <title>Complete sequence of Pseudomonas mendocina ymp.</title>
        <authorList>
            <consortium name="US DOE Joint Genome Institute"/>
            <person name="Copeland A."/>
            <person name="Lucas S."/>
            <person name="Lapidus A."/>
            <person name="Barry K."/>
            <person name="Glavina del Rio T."/>
            <person name="Dalin E."/>
            <person name="Tice H."/>
            <person name="Pitluck S."/>
            <person name="Kiss H."/>
            <person name="Brettin T."/>
            <person name="Detter J.C."/>
            <person name="Bruce D."/>
            <person name="Han C."/>
            <person name="Schmutz J."/>
            <person name="Larimer F."/>
            <person name="Land M."/>
            <person name="Hauser L."/>
            <person name="Kyrpides N."/>
            <person name="Mikhailova N."/>
            <person name="Hersman L."/>
            <person name="Dubois J."/>
            <person name="Maurice P."/>
            <person name="Richardson P."/>
        </authorList>
    </citation>
    <scope>NUCLEOTIDE SEQUENCE [LARGE SCALE GENOMIC DNA]</scope>
    <source>
        <strain>ymp</strain>
    </source>
</reference>
<organism>
    <name type="scientific">Ectopseudomonas mendocina (strain ymp)</name>
    <name type="common">Pseudomonas mendocina</name>
    <dbReference type="NCBI Taxonomy" id="399739"/>
    <lineage>
        <taxon>Bacteria</taxon>
        <taxon>Pseudomonadati</taxon>
        <taxon>Pseudomonadota</taxon>
        <taxon>Gammaproteobacteria</taxon>
        <taxon>Pseudomonadales</taxon>
        <taxon>Pseudomonadaceae</taxon>
        <taxon>Ectopseudomonas</taxon>
    </lineage>
</organism>
<proteinExistence type="inferred from homology"/>
<evidence type="ECO:0000250" key="1"/>
<evidence type="ECO:0000255" key="2">
    <source>
        <dbReference type="HAMAP-Rule" id="MF_00403"/>
    </source>
</evidence>
<evidence type="ECO:0000256" key="3">
    <source>
        <dbReference type="SAM" id="MobiDB-lite"/>
    </source>
</evidence>
<evidence type="ECO:0000305" key="4"/>
<dbReference type="EMBL" id="CP000680">
    <property type="protein sequence ID" value="ABP86661.1"/>
    <property type="molecule type" value="Genomic_DNA"/>
</dbReference>
<dbReference type="SMR" id="A4XZ95"/>
<dbReference type="STRING" id="399739.Pmen_3914"/>
<dbReference type="KEGG" id="pmy:Pmen_3914"/>
<dbReference type="eggNOG" id="COG0048">
    <property type="taxonomic scope" value="Bacteria"/>
</dbReference>
<dbReference type="HOGENOM" id="CLU_104295_1_2_6"/>
<dbReference type="OrthoDB" id="9802366at2"/>
<dbReference type="GO" id="GO:0015935">
    <property type="term" value="C:small ribosomal subunit"/>
    <property type="evidence" value="ECO:0007669"/>
    <property type="project" value="InterPro"/>
</dbReference>
<dbReference type="GO" id="GO:0019843">
    <property type="term" value="F:rRNA binding"/>
    <property type="evidence" value="ECO:0007669"/>
    <property type="project" value="UniProtKB-UniRule"/>
</dbReference>
<dbReference type="GO" id="GO:0003735">
    <property type="term" value="F:structural constituent of ribosome"/>
    <property type="evidence" value="ECO:0007669"/>
    <property type="project" value="InterPro"/>
</dbReference>
<dbReference type="GO" id="GO:0000049">
    <property type="term" value="F:tRNA binding"/>
    <property type="evidence" value="ECO:0007669"/>
    <property type="project" value="UniProtKB-UniRule"/>
</dbReference>
<dbReference type="GO" id="GO:0006412">
    <property type="term" value="P:translation"/>
    <property type="evidence" value="ECO:0007669"/>
    <property type="project" value="UniProtKB-UniRule"/>
</dbReference>
<dbReference type="CDD" id="cd03368">
    <property type="entry name" value="Ribosomal_S12"/>
    <property type="match status" value="1"/>
</dbReference>
<dbReference type="FunFam" id="2.40.50.140:FF:000001">
    <property type="entry name" value="30S ribosomal protein S12"/>
    <property type="match status" value="1"/>
</dbReference>
<dbReference type="Gene3D" id="2.40.50.140">
    <property type="entry name" value="Nucleic acid-binding proteins"/>
    <property type="match status" value="1"/>
</dbReference>
<dbReference type="HAMAP" id="MF_00403_B">
    <property type="entry name" value="Ribosomal_uS12_B"/>
    <property type="match status" value="1"/>
</dbReference>
<dbReference type="InterPro" id="IPR012340">
    <property type="entry name" value="NA-bd_OB-fold"/>
</dbReference>
<dbReference type="InterPro" id="IPR006032">
    <property type="entry name" value="Ribosomal_uS12"/>
</dbReference>
<dbReference type="InterPro" id="IPR005679">
    <property type="entry name" value="Ribosomal_uS12_bac"/>
</dbReference>
<dbReference type="NCBIfam" id="TIGR00981">
    <property type="entry name" value="rpsL_bact"/>
    <property type="match status" value="1"/>
</dbReference>
<dbReference type="PANTHER" id="PTHR11652">
    <property type="entry name" value="30S RIBOSOMAL PROTEIN S12 FAMILY MEMBER"/>
    <property type="match status" value="1"/>
</dbReference>
<dbReference type="Pfam" id="PF00164">
    <property type="entry name" value="Ribosom_S12_S23"/>
    <property type="match status" value="1"/>
</dbReference>
<dbReference type="PIRSF" id="PIRSF002133">
    <property type="entry name" value="Ribosomal_S12/S23"/>
    <property type="match status" value="1"/>
</dbReference>
<dbReference type="PRINTS" id="PR01034">
    <property type="entry name" value="RIBOSOMALS12"/>
</dbReference>
<dbReference type="SUPFAM" id="SSF50249">
    <property type="entry name" value="Nucleic acid-binding proteins"/>
    <property type="match status" value="1"/>
</dbReference>
<dbReference type="PROSITE" id="PS00055">
    <property type="entry name" value="RIBOSOMAL_S12"/>
    <property type="match status" value="1"/>
</dbReference>
<feature type="chain" id="PRO_1000049802" description="Small ribosomal subunit protein uS12">
    <location>
        <begin position="1"/>
        <end position="123"/>
    </location>
</feature>
<feature type="region of interest" description="Disordered" evidence="3">
    <location>
        <begin position="100"/>
        <end position="123"/>
    </location>
</feature>
<feature type="compositionally biased region" description="Basic residues" evidence="3">
    <location>
        <begin position="113"/>
        <end position="123"/>
    </location>
</feature>
<feature type="modified residue" description="3-methylthioaspartic acid" evidence="1">
    <location>
        <position position="89"/>
    </location>
</feature>
<keyword id="KW-0488">Methylation</keyword>
<keyword id="KW-0687">Ribonucleoprotein</keyword>
<keyword id="KW-0689">Ribosomal protein</keyword>
<keyword id="KW-0694">RNA-binding</keyword>
<keyword id="KW-0699">rRNA-binding</keyword>
<keyword id="KW-0820">tRNA-binding</keyword>
<name>RS12_ECTM1</name>
<protein>
    <recommendedName>
        <fullName evidence="2">Small ribosomal subunit protein uS12</fullName>
    </recommendedName>
    <alternativeName>
        <fullName evidence="4">30S ribosomal protein S12</fullName>
    </alternativeName>
</protein>
<sequence>MATINQLVRQPRKRIVEKSDVPALQNCPQRRGVCTRVYTTTPKKPNSALRKVCRVRLTNGYEVSSYIGGEGHNLQEHSVVLIRGGRVKDLPGVRYHTVRGSLDTSGVKDRKQGRSKYGTKRPK</sequence>